<evidence type="ECO:0000250" key="1"/>
<evidence type="ECO:0000255" key="2">
    <source>
        <dbReference type="HAMAP-Rule" id="MF_01926"/>
    </source>
</evidence>
<evidence type="ECO:0007829" key="3">
    <source>
        <dbReference type="PDB" id="2YX5"/>
    </source>
</evidence>
<keyword id="KW-0002">3D-structure</keyword>
<keyword id="KW-0067">ATP-binding</keyword>
<keyword id="KW-0963">Cytoplasm</keyword>
<keyword id="KW-0436">Ligase</keyword>
<keyword id="KW-0547">Nucleotide-binding</keyword>
<keyword id="KW-0658">Purine biosynthesis</keyword>
<keyword id="KW-1185">Reference proteome</keyword>
<proteinExistence type="evidence at protein level"/>
<gene>
    <name evidence="2" type="primary">purS</name>
    <name type="ordered locus">MJ1593</name>
</gene>
<dbReference type="EC" id="6.3.5.3" evidence="2"/>
<dbReference type="EMBL" id="L77117">
    <property type="protein sequence ID" value="AAB99611.1"/>
    <property type="molecule type" value="Genomic_DNA"/>
</dbReference>
<dbReference type="PIR" id="H64498">
    <property type="entry name" value="H64498"/>
</dbReference>
<dbReference type="RefSeq" id="WP_010871117.1">
    <property type="nucleotide sequence ID" value="NC_000909.1"/>
</dbReference>
<dbReference type="PDB" id="2YX5">
    <property type="method" value="X-ray"/>
    <property type="resolution" value="2.30 A"/>
    <property type="chains" value="A=1-83"/>
</dbReference>
<dbReference type="PDBsum" id="2YX5"/>
<dbReference type="SMR" id="Q58988"/>
<dbReference type="FunCoup" id="Q58988">
    <property type="interactions" value="7"/>
</dbReference>
<dbReference type="STRING" id="243232.MJ_1593"/>
<dbReference type="PaxDb" id="243232-MJ_1593"/>
<dbReference type="EnsemblBacteria" id="AAB99611">
    <property type="protein sequence ID" value="AAB99611"/>
    <property type="gene ID" value="MJ_1593"/>
</dbReference>
<dbReference type="GeneID" id="1452501"/>
<dbReference type="KEGG" id="mja:MJ_1593"/>
<dbReference type="eggNOG" id="arCOG04462">
    <property type="taxonomic scope" value="Archaea"/>
</dbReference>
<dbReference type="HOGENOM" id="CLU_164833_3_0_2"/>
<dbReference type="InParanoid" id="Q58988"/>
<dbReference type="OrthoDB" id="56303at2157"/>
<dbReference type="PhylomeDB" id="Q58988"/>
<dbReference type="BRENDA" id="6.3.5.3">
    <property type="organism ID" value="3260"/>
</dbReference>
<dbReference type="UniPathway" id="UPA00074">
    <property type="reaction ID" value="UER00128"/>
</dbReference>
<dbReference type="EvolutionaryTrace" id="Q58988"/>
<dbReference type="Proteomes" id="UP000000805">
    <property type="component" value="Chromosome"/>
</dbReference>
<dbReference type="GO" id="GO:0005737">
    <property type="term" value="C:cytoplasm"/>
    <property type="evidence" value="ECO:0007669"/>
    <property type="project" value="UniProtKB-SubCell"/>
</dbReference>
<dbReference type="GO" id="GO:0005524">
    <property type="term" value="F:ATP binding"/>
    <property type="evidence" value="ECO:0007669"/>
    <property type="project" value="UniProtKB-UniRule"/>
</dbReference>
<dbReference type="GO" id="GO:0004642">
    <property type="term" value="F:phosphoribosylformylglycinamidine synthase activity"/>
    <property type="evidence" value="ECO:0007669"/>
    <property type="project" value="UniProtKB-UniRule"/>
</dbReference>
<dbReference type="GO" id="GO:0006189">
    <property type="term" value="P:'de novo' IMP biosynthetic process"/>
    <property type="evidence" value="ECO:0007669"/>
    <property type="project" value="UniProtKB-UniRule"/>
</dbReference>
<dbReference type="Gene3D" id="3.30.1280.10">
    <property type="entry name" value="Phosphoribosylformylglycinamidine synthase subunit PurS"/>
    <property type="match status" value="1"/>
</dbReference>
<dbReference type="HAMAP" id="MF_01926">
    <property type="entry name" value="PurS"/>
    <property type="match status" value="1"/>
</dbReference>
<dbReference type="InterPro" id="IPR003850">
    <property type="entry name" value="PurS"/>
</dbReference>
<dbReference type="InterPro" id="IPR036604">
    <property type="entry name" value="PurS-like_sf"/>
</dbReference>
<dbReference type="NCBIfam" id="TIGR00302">
    <property type="entry name" value="phosphoribosylformylglycinamidine synthase subunit PurS"/>
    <property type="match status" value="1"/>
</dbReference>
<dbReference type="NCBIfam" id="NF004630">
    <property type="entry name" value="PRK05974.1"/>
    <property type="match status" value="1"/>
</dbReference>
<dbReference type="PANTHER" id="PTHR34696">
    <property type="entry name" value="PHOSPHORIBOSYLFORMYLGLYCINAMIDINE SYNTHASE SUBUNIT PURS"/>
    <property type="match status" value="1"/>
</dbReference>
<dbReference type="PANTHER" id="PTHR34696:SF1">
    <property type="entry name" value="PHOSPHORIBOSYLFORMYLGLYCINAMIDINE SYNTHASE SUBUNIT PURS"/>
    <property type="match status" value="1"/>
</dbReference>
<dbReference type="Pfam" id="PF02700">
    <property type="entry name" value="PurS"/>
    <property type="match status" value="1"/>
</dbReference>
<dbReference type="SUPFAM" id="SSF82697">
    <property type="entry name" value="PurS-like"/>
    <property type="match status" value="1"/>
</dbReference>
<name>PURS_METJA</name>
<feature type="chain" id="PRO_0000100399" description="Phosphoribosylformylglycinamidine synthase subunit PurS">
    <location>
        <begin position="1"/>
        <end position="83"/>
    </location>
</feature>
<feature type="strand" evidence="3">
    <location>
        <begin position="2"/>
        <end position="10"/>
    </location>
</feature>
<feature type="helix" evidence="3">
    <location>
        <begin position="17"/>
        <end position="28"/>
    </location>
</feature>
<feature type="strand" evidence="3">
    <location>
        <begin position="41"/>
        <end position="47"/>
    </location>
</feature>
<feature type="helix" evidence="3">
    <location>
        <begin position="52"/>
        <end position="65"/>
    </location>
</feature>
<feature type="turn" evidence="3">
    <location>
        <begin position="70"/>
        <end position="72"/>
    </location>
</feature>
<feature type="strand" evidence="3">
    <location>
        <begin position="73"/>
        <end position="81"/>
    </location>
</feature>
<protein>
    <recommendedName>
        <fullName evidence="2">Phosphoribosylformylglycinamidine synthase subunit PurS</fullName>
        <shortName evidence="2">FGAM synthase</shortName>
        <ecNumber evidence="2">6.3.5.3</ecNumber>
    </recommendedName>
    <alternativeName>
        <fullName evidence="2">Formylglycinamide ribonucleotide amidotransferase subunit III</fullName>
        <shortName evidence="2">FGAR amidotransferase III</shortName>
        <shortName evidence="2">FGAR-AT III</shortName>
    </alternativeName>
    <alternativeName>
        <fullName evidence="2">Phosphoribosylformylglycinamidine synthase subunit III</fullName>
    </alternativeName>
</protein>
<accession>Q58988</accession>
<sequence length="83" mass="9696">MYKATVIIKLKKGVLNPEGRTIQRALNFLGFNNVKEVQTYKMIDIIMEGENEEKVKEEVEEMCKKLLANPVIHDYEIKVEKIE</sequence>
<reference key="1">
    <citation type="journal article" date="1996" name="Science">
        <title>Complete genome sequence of the methanogenic archaeon, Methanococcus jannaschii.</title>
        <authorList>
            <person name="Bult C.J."/>
            <person name="White O."/>
            <person name="Olsen G.J."/>
            <person name="Zhou L."/>
            <person name="Fleischmann R.D."/>
            <person name="Sutton G.G."/>
            <person name="Blake J.A."/>
            <person name="FitzGerald L.M."/>
            <person name="Clayton R.A."/>
            <person name="Gocayne J.D."/>
            <person name="Kerlavage A.R."/>
            <person name="Dougherty B.A."/>
            <person name="Tomb J.-F."/>
            <person name="Adams M.D."/>
            <person name="Reich C.I."/>
            <person name="Overbeek R."/>
            <person name="Kirkness E.F."/>
            <person name="Weinstock K.G."/>
            <person name="Merrick J.M."/>
            <person name="Glodek A."/>
            <person name="Scott J.L."/>
            <person name="Geoghagen N.S.M."/>
            <person name="Weidman J.F."/>
            <person name="Fuhrmann J.L."/>
            <person name="Nguyen D."/>
            <person name="Utterback T.R."/>
            <person name="Kelley J.M."/>
            <person name="Peterson J.D."/>
            <person name="Sadow P.W."/>
            <person name="Hanna M.C."/>
            <person name="Cotton M.D."/>
            <person name="Roberts K.M."/>
            <person name="Hurst M.A."/>
            <person name="Kaine B.P."/>
            <person name="Borodovsky M."/>
            <person name="Klenk H.-P."/>
            <person name="Fraser C.M."/>
            <person name="Smith H.O."/>
            <person name="Woese C.R."/>
            <person name="Venter J.C."/>
        </authorList>
    </citation>
    <scope>NUCLEOTIDE SEQUENCE [LARGE SCALE GENOMIC DNA]</scope>
    <source>
        <strain>ATCC 43067 / DSM 2661 / JAL-1 / JCM 10045 / NBRC 100440</strain>
    </source>
</reference>
<reference key="2">
    <citation type="submission" date="2011-07" db="PDB data bank">
        <title>Crystal structure of Methanocaldococcus jannaschII purs, one of the subunits of formylglycinamide ribonucleotide amidotransferase in the purine biosynthetic pathway.</title>
        <authorList>
            <consortium name="RIKEN structural genomics initiative (RSGI)"/>
        </authorList>
    </citation>
    <scope>X-RAY CRYSTALLOGRAPHY (2.3 ANGSTROMS)</scope>
</reference>
<organism>
    <name type="scientific">Methanocaldococcus jannaschii (strain ATCC 43067 / DSM 2661 / JAL-1 / JCM 10045 / NBRC 100440)</name>
    <name type="common">Methanococcus jannaschii</name>
    <dbReference type="NCBI Taxonomy" id="243232"/>
    <lineage>
        <taxon>Archaea</taxon>
        <taxon>Methanobacteriati</taxon>
        <taxon>Methanobacteriota</taxon>
        <taxon>Methanomada group</taxon>
        <taxon>Methanococci</taxon>
        <taxon>Methanococcales</taxon>
        <taxon>Methanocaldococcaceae</taxon>
        <taxon>Methanocaldococcus</taxon>
    </lineage>
</organism>
<comment type="function">
    <text evidence="2">Part of the phosphoribosylformylglycinamidine synthase complex involved in the purines biosynthetic pathway. Catalyzes the ATP-dependent conversion of formylglycinamide ribonucleotide (FGAR) and glutamine to yield formylglycinamidine ribonucleotide (FGAM) and glutamate. The FGAM synthase complex is composed of three subunits. PurQ produces an ammonia molecule by converting glutamine to glutamate. PurL transfers the ammonia molecule to FGAR to form FGAM in an ATP-dependent manner. PurS interacts with PurQ and PurL and is thought to assist in the transfer of the ammonia molecule from PurQ to PurL.</text>
</comment>
<comment type="catalytic activity">
    <reaction evidence="2">
        <text>N(2)-formyl-N(1)-(5-phospho-beta-D-ribosyl)glycinamide + L-glutamine + ATP + H2O = 2-formamido-N(1)-(5-O-phospho-beta-D-ribosyl)acetamidine + L-glutamate + ADP + phosphate + H(+)</text>
        <dbReference type="Rhea" id="RHEA:17129"/>
        <dbReference type="ChEBI" id="CHEBI:15377"/>
        <dbReference type="ChEBI" id="CHEBI:15378"/>
        <dbReference type="ChEBI" id="CHEBI:29985"/>
        <dbReference type="ChEBI" id="CHEBI:30616"/>
        <dbReference type="ChEBI" id="CHEBI:43474"/>
        <dbReference type="ChEBI" id="CHEBI:58359"/>
        <dbReference type="ChEBI" id="CHEBI:147286"/>
        <dbReference type="ChEBI" id="CHEBI:147287"/>
        <dbReference type="ChEBI" id="CHEBI:456216"/>
        <dbReference type="EC" id="6.3.5.3"/>
    </reaction>
</comment>
<comment type="pathway">
    <text evidence="2">Purine metabolism; IMP biosynthesis via de novo pathway; 5-amino-1-(5-phospho-D-ribosyl)imidazole from N(2)-formyl-N(1)-(5-phospho-D-ribosyl)glycinamide: step 1/2.</text>
</comment>
<comment type="subunit">
    <text evidence="1">Homodimer. Part of the FGAM synthase complex composed of 1 PurL, 1 PurQ and 2 PurS subunits (By similarity).</text>
</comment>
<comment type="subcellular location">
    <subcellularLocation>
        <location evidence="2">Cytoplasm</location>
    </subcellularLocation>
</comment>
<comment type="similarity">
    <text evidence="2">Belongs to the PurS family.</text>
</comment>